<name>ALG14_CRYNJ</name>
<gene>
    <name type="primary">ALG14</name>
    <name type="ordered locus">CNB01840</name>
</gene>
<reference key="1">
    <citation type="journal article" date="2005" name="Science">
        <title>The genome of the basidiomycetous yeast and human pathogen Cryptococcus neoformans.</title>
        <authorList>
            <person name="Loftus B.J."/>
            <person name="Fung E."/>
            <person name="Roncaglia P."/>
            <person name="Rowley D."/>
            <person name="Amedeo P."/>
            <person name="Bruno D."/>
            <person name="Vamathevan J."/>
            <person name="Miranda M."/>
            <person name="Anderson I.J."/>
            <person name="Fraser J.A."/>
            <person name="Allen J.E."/>
            <person name="Bosdet I.E."/>
            <person name="Brent M.R."/>
            <person name="Chiu R."/>
            <person name="Doering T.L."/>
            <person name="Donlin M.J."/>
            <person name="D'Souza C.A."/>
            <person name="Fox D.S."/>
            <person name="Grinberg V."/>
            <person name="Fu J."/>
            <person name="Fukushima M."/>
            <person name="Haas B.J."/>
            <person name="Huang J.C."/>
            <person name="Janbon G."/>
            <person name="Jones S.J.M."/>
            <person name="Koo H.L."/>
            <person name="Krzywinski M.I."/>
            <person name="Kwon-Chung K.J."/>
            <person name="Lengeler K.B."/>
            <person name="Maiti R."/>
            <person name="Marra M.A."/>
            <person name="Marra R.E."/>
            <person name="Mathewson C.A."/>
            <person name="Mitchell T.G."/>
            <person name="Pertea M."/>
            <person name="Riggs F.R."/>
            <person name="Salzberg S.L."/>
            <person name="Schein J.E."/>
            <person name="Shvartsbeyn A."/>
            <person name="Shin H."/>
            <person name="Shumway M."/>
            <person name="Specht C.A."/>
            <person name="Suh B.B."/>
            <person name="Tenney A."/>
            <person name="Utterback T.R."/>
            <person name="Wickes B.L."/>
            <person name="Wortman J.R."/>
            <person name="Wye N.H."/>
            <person name="Kronstad J.W."/>
            <person name="Lodge J.K."/>
            <person name="Heitman J."/>
            <person name="Davis R.W."/>
            <person name="Fraser C.M."/>
            <person name="Hyman R.W."/>
        </authorList>
    </citation>
    <scope>NUCLEOTIDE SEQUENCE [LARGE SCALE GENOMIC DNA]</scope>
    <source>
        <strain>JEC21 / ATCC MYA-565</strain>
    </source>
</reference>
<accession>P0CM10</accession>
<accession>Q55XH5</accession>
<accession>Q5KMF9</accession>
<feature type="chain" id="PRO_0000123813" description="UDP-N-acetylglucosamine transferase subunit ALG14">
    <location>
        <begin position="1"/>
        <end position="230"/>
    </location>
</feature>
<feature type="topological domain" description="Lumenal" evidence="2">
    <location>
        <begin position="1"/>
        <end position="6"/>
    </location>
</feature>
<feature type="transmembrane region" description="Helical" evidence="3">
    <location>
        <begin position="7"/>
        <end position="27"/>
    </location>
</feature>
<feature type="topological domain" description="Cytoplasmic" evidence="2">
    <location>
        <begin position="28"/>
        <end position="230"/>
    </location>
</feature>
<proteinExistence type="inferred from homology"/>
<dbReference type="EMBL" id="AE017342">
    <property type="protein sequence ID" value="AAW41698.2"/>
    <property type="molecule type" value="Genomic_DNA"/>
</dbReference>
<dbReference type="RefSeq" id="XP_569005.1">
    <property type="nucleotide sequence ID" value="XM_569005.1"/>
</dbReference>
<dbReference type="FunCoup" id="P0CM10">
    <property type="interactions" value="122"/>
</dbReference>
<dbReference type="STRING" id="214684.P0CM10"/>
<dbReference type="PaxDb" id="214684-P0CM10"/>
<dbReference type="eggNOG" id="KOG3339">
    <property type="taxonomic scope" value="Eukaryota"/>
</dbReference>
<dbReference type="HOGENOM" id="CLU_064541_0_1_1"/>
<dbReference type="InParanoid" id="P0CM10"/>
<dbReference type="Proteomes" id="UP000002149">
    <property type="component" value="Chromosome 2"/>
</dbReference>
<dbReference type="GO" id="GO:0031965">
    <property type="term" value="C:nuclear membrane"/>
    <property type="evidence" value="ECO:0007669"/>
    <property type="project" value="UniProtKB-SubCell"/>
</dbReference>
<dbReference type="GO" id="GO:0043541">
    <property type="term" value="C:UDP-N-acetylglucosamine transferase complex"/>
    <property type="evidence" value="ECO:0000318"/>
    <property type="project" value="GO_Central"/>
</dbReference>
<dbReference type="GO" id="GO:0006488">
    <property type="term" value="P:dolichol-linked oligosaccharide biosynthetic process"/>
    <property type="evidence" value="ECO:0000318"/>
    <property type="project" value="GO_Central"/>
</dbReference>
<dbReference type="FunFam" id="3.40.50.2000:FF:000289">
    <property type="entry name" value="UDP-N-acetylglucosamine transferase subunit ALG14"/>
    <property type="match status" value="1"/>
</dbReference>
<dbReference type="Gene3D" id="3.40.50.2000">
    <property type="entry name" value="Glycogen Phosphorylase B"/>
    <property type="match status" value="1"/>
</dbReference>
<dbReference type="InterPro" id="IPR013969">
    <property type="entry name" value="Oligosacch_biosynth_Alg14"/>
</dbReference>
<dbReference type="PANTHER" id="PTHR12154">
    <property type="entry name" value="GLYCOSYL TRANSFERASE-RELATED"/>
    <property type="match status" value="1"/>
</dbReference>
<dbReference type="PANTHER" id="PTHR12154:SF4">
    <property type="entry name" value="UDP-N-ACETYLGLUCOSAMINE TRANSFERASE SUBUNIT ALG14 HOMOLOG"/>
    <property type="match status" value="1"/>
</dbReference>
<dbReference type="Pfam" id="PF08660">
    <property type="entry name" value="Alg14"/>
    <property type="match status" value="1"/>
</dbReference>
<keyword id="KW-0256">Endoplasmic reticulum</keyword>
<keyword id="KW-0472">Membrane</keyword>
<keyword id="KW-0539">Nucleus</keyword>
<keyword id="KW-1185">Reference proteome</keyword>
<keyword id="KW-0812">Transmembrane</keyword>
<keyword id="KW-1133">Transmembrane helix</keyword>
<sequence length="230" mass="25834">MSLGRYIGWSILAFTYLVLAILLRLIFLQPSKTSRASYRPKDAKCSLGVFLGSGGHTSEMKALLSTLDYERYQPRTYIYCHGDDLSLRAVSDIESSKGGLISSKMYYLLSLPRARRVGQPLLSTMVSVLKTLYIAALRLFLIPLLKNPRRPFVDLLIVNGPGTCVVLVLVSYIRRILGLEYTRIIYVESFARVKSLSLSGKMIRPLADRFLVQWPDASDSDNVIHKGLLV</sequence>
<protein>
    <recommendedName>
        <fullName>UDP-N-acetylglucosamine transferase subunit ALG14</fullName>
    </recommendedName>
    <alternativeName>
        <fullName>Asparagine-linked glycosylation protein 14</fullName>
    </alternativeName>
</protein>
<comment type="function">
    <text evidence="1">Involved in protein N-glycosylation. Essential for the second step of the dolichol-linked oligosaccharide pathway. Anchors the catalytic subunit ALG13 to the ER (By similarity).</text>
</comment>
<comment type="subunit">
    <text evidence="1">Heterodimer with ALG13 to form a functional enzyme.</text>
</comment>
<comment type="subcellular location">
    <subcellularLocation>
        <location evidence="2">Endoplasmic reticulum membrane</location>
        <topology evidence="3">Single-pass membrane protein</topology>
    </subcellularLocation>
    <subcellularLocation>
        <location evidence="2">Nucleus membrane</location>
        <topology evidence="3">Single-pass membrane protein</topology>
    </subcellularLocation>
</comment>
<comment type="similarity">
    <text evidence="4">Belongs to the ALG14 family.</text>
</comment>
<organism>
    <name type="scientific">Cryptococcus neoformans var. neoformans serotype D (strain JEC21 / ATCC MYA-565)</name>
    <name type="common">Filobasidiella neoformans</name>
    <dbReference type="NCBI Taxonomy" id="214684"/>
    <lineage>
        <taxon>Eukaryota</taxon>
        <taxon>Fungi</taxon>
        <taxon>Dikarya</taxon>
        <taxon>Basidiomycota</taxon>
        <taxon>Agaricomycotina</taxon>
        <taxon>Tremellomycetes</taxon>
        <taxon>Tremellales</taxon>
        <taxon>Cryptococcaceae</taxon>
        <taxon>Cryptococcus</taxon>
        <taxon>Cryptococcus neoformans species complex</taxon>
    </lineage>
</organism>
<evidence type="ECO:0000250" key="1"/>
<evidence type="ECO:0000250" key="2">
    <source>
        <dbReference type="UniProtKB" id="P38242"/>
    </source>
</evidence>
<evidence type="ECO:0000255" key="3"/>
<evidence type="ECO:0000305" key="4"/>